<reference key="1">
    <citation type="journal article" date="2008" name="Genome Res.">
        <title>Insights from the complete genome sequence of Mycobacterium marinum on the evolution of Mycobacterium tuberculosis.</title>
        <authorList>
            <person name="Stinear T.P."/>
            <person name="Seemann T."/>
            <person name="Harrison P.F."/>
            <person name="Jenkin G.A."/>
            <person name="Davies J.K."/>
            <person name="Johnson P.D."/>
            <person name="Abdellah Z."/>
            <person name="Arrowsmith C."/>
            <person name="Chillingworth T."/>
            <person name="Churcher C."/>
            <person name="Clarke K."/>
            <person name="Cronin A."/>
            <person name="Davis P."/>
            <person name="Goodhead I."/>
            <person name="Holroyd N."/>
            <person name="Jagels K."/>
            <person name="Lord A."/>
            <person name="Moule S."/>
            <person name="Mungall K."/>
            <person name="Norbertczak H."/>
            <person name="Quail M.A."/>
            <person name="Rabbinowitsch E."/>
            <person name="Walker D."/>
            <person name="White B."/>
            <person name="Whitehead S."/>
            <person name="Small P.L."/>
            <person name="Brosch R."/>
            <person name="Ramakrishnan L."/>
            <person name="Fischbach M.A."/>
            <person name="Parkhill J."/>
            <person name="Cole S.T."/>
        </authorList>
    </citation>
    <scope>NUCLEOTIDE SEQUENCE [LARGE SCALE GENOMIC DNA]</scope>
    <source>
        <strain>ATCC BAA-535 / M</strain>
    </source>
</reference>
<protein>
    <recommendedName>
        <fullName evidence="2">Small ribosomal subunit protein uS12</fullName>
    </recommendedName>
    <alternativeName>
        <fullName evidence="4">30S ribosomal protein S12</fullName>
    </alternativeName>
</protein>
<gene>
    <name evidence="2" type="primary">rpsL</name>
    <name type="ordered locus">MMAR_1011</name>
</gene>
<name>RS12_MYCMM</name>
<evidence type="ECO:0000250" key="1"/>
<evidence type="ECO:0000255" key="2">
    <source>
        <dbReference type="HAMAP-Rule" id="MF_00403"/>
    </source>
</evidence>
<evidence type="ECO:0000256" key="3">
    <source>
        <dbReference type="SAM" id="MobiDB-lite"/>
    </source>
</evidence>
<evidence type="ECO:0000305" key="4"/>
<accession>B2HSL0</accession>
<dbReference type="EMBL" id="CP000854">
    <property type="protein sequence ID" value="ACC39468.1"/>
    <property type="molecule type" value="Genomic_DNA"/>
</dbReference>
<dbReference type="RefSeq" id="WP_003879423.1">
    <property type="nucleotide sequence ID" value="NC_010612.1"/>
</dbReference>
<dbReference type="SMR" id="B2HSL0"/>
<dbReference type="STRING" id="216594.MMAR_1011"/>
<dbReference type="GeneID" id="93493130"/>
<dbReference type="KEGG" id="mmi:MMAR_1011"/>
<dbReference type="eggNOG" id="COG0048">
    <property type="taxonomic scope" value="Bacteria"/>
</dbReference>
<dbReference type="HOGENOM" id="CLU_104295_1_2_11"/>
<dbReference type="OrthoDB" id="9802366at2"/>
<dbReference type="Proteomes" id="UP000001190">
    <property type="component" value="Chromosome"/>
</dbReference>
<dbReference type="GO" id="GO:0015935">
    <property type="term" value="C:small ribosomal subunit"/>
    <property type="evidence" value="ECO:0007669"/>
    <property type="project" value="InterPro"/>
</dbReference>
<dbReference type="GO" id="GO:0019843">
    <property type="term" value="F:rRNA binding"/>
    <property type="evidence" value="ECO:0007669"/>
    <property type="project" value="UniProtKB-UniRule"/>
</dbReference>
<dbReference type="GO" id="GO:0003735">
    <property type="term" value="F:structural constituent of ribosome"/>
    <property type="evidence" value="ECO:0007669"/>
    <property type="project" value="InterPro"/>
</dbReference>
<dbReference type="GO" id="GO:0000049">
    <property type="term" value="F:tRNA binding"/>
    <property type="evidence" value="ECO:0007669"/>
    <property type="project" value="UniProtKB-UniRule"/>
</dbReference>
<dbReference type="GO" id="GO:0006412">
    <property type="term" value="P:translation"/>
    <property type="evidence" value="ECO:0007669"/>
    <property type="project" value="UniProtKB-UniRule"/>
</dbReference>
<dbReference type="CDD" id="cd03368">
    <property type="entry name" value="Ribosomal_S12"/>
    <property type="match status" value="1"/>
</dbReference>
<dbReference type="FunFam" id="2.40.50.140:FF:000001">
    <property type="entry name" value="30S ribosomal protein S12"/>
    <property type="match status" value="1"/>
</dbReference>
<dbReference type="Gene3D" id="2.40.50.140">
    <property type="entry name" value="Nucleic acid-binding proteins"/>
    <property type="match status" value="1"/>
</dbReference>
<dbReference type="HAMAP" id="MF_00403_B">
    <property type="entry name" value="Ribosomal_uS12_B"/>
    <property type="match status" value="1"/>
</dbReference>
<dbReference type="InterPro" id="IPR012340">
    <property type="entry name" value="NA-bd_OB-fold"/>
</dbReference>
<dbReference type="InterPro" id="IPR006032">
    <property type="entry name" value="Ribosomal_uS12"/>
</dbReference>
<dbReference type="InterPro" id="IPR005679">
    <property type="entry name" value="Ribosomal_uS12_bac"/>
</dbReference>
<dbReference type="NCBIfam" id="TIGR00981">
    <property type="entry name" value="rpsL_bact"/>
    <property type="match status" value="1"/>
</dbReference>
<dbReference type="PANTHER" id="PTHR11652">
    <property type="entry name" value="30S RIBOSOMAL PROTEIN S12 FAMILY MEMBER"/>
    <property type="match status" value="1"/>
</dbReference>
<dbReference type="Pfam" id="PF00164">
    <property type="entry name" value="Ribosom_S12_S23"/>
    <property type="match status" value="1"/>
</dbReference>
<dbReference type="PIRSF" id="PIRSF002133">
    <property type="entry name" value="Ribosomal_S12/S23"/>
    <property type="match status" value="1"/>
</dbReference>
<dbReference type="PRINTS" id="PR01034">
    <property type="entry name" value="RIBOSOMALS12"/>
</dbReference>
<dbReference type="SUPFAM" id="SSF50249">
    <property type="entry name" value="Nucleic acid-binding proteins"/>
    <property type="match status" value="1"/>
</dbReference>
<dbReference type="PROSITE" id="PS00055">
    <property type="entry name" value="RIBOSOMAL_S12"/>
    <property type="match status" value="1"/>
</dbReference>
<organism>
    <name type="scientific">Mycobacterium marinum (strain ATCC BAA-535 / M)</name>
    <dbReference type="NCBI Taxonomy" id="216594"/>
    <lineage>
        <taxon>Bacteria</taxon>
        <taxon>Bacillati</taxon>
        <taxon>Actinomycetota</taxon>
        <taxon>Actinomycetes</taxon>
        <taxon>Mycobacteriales</taxon>
        <taxon>Mycobacteriaceae</taxon>
        <taxon>Mycobacterium</taxon>
        <taxon>Mycobacterium ulcerans group</taxon>
    </lineage>
</organism>
<keyword id="KW-0488">Methylation</keyword>
<keyword id="KW-1185">Reference proteome</keyword>
<keyword id="KW-0687">Ribonucleoprotein</keyword>
<keyword id="KW-0689">Ribosomal protein</keyword>
<keyword id="KW-0694">RNA-binding</keyword>
<keyword id="KW-0699">rRNA-binding</keyword>
<keyword id="KW-0820">tRNA-binding</keyword>
<sequence length="124" mass="13849">MPTIQQLVRKGRRDKIGKVKTAALKGSPQRRGVCTRVYTTTPKKPNSALRKVARVKLTSQVEVTAYIPGEGHNLQEHSMVLVRGGRVKDLPGVRYKIIRGSLDTQGVKNRKQARSRYGAKKEKS</sequence>
<proteinExistence type="inferred from homology"/>
<comment type="function">
    <text evidence="2">With S4 and S5 plays an important role in translational accuracy.</text>
</comment>
<comment type="function">
    <text evidence="2">Interacts with and stabilizes bases of the 16S rRNA that are involved in tRNA selection in the A site and with the mRNA backbone. Located at the interface of the 30S and 50S subunits, it traverses the body of the 30S subunit contacting proteins on the other side and probably holding the rRNA structure together. The combined cluster of proteins S8, S12 and S17 appears to hold together the shoulder and platform of the 30S subunit.</text>
</comment>
<comment type="subunit">
    <text evidence="2">Part of the 30S ribosomal subunit. Contacts proteins S8 and S17. May interact with IF1 in the 30S initiation complex.</text>
</comment>
<comment type="similarity">
    <text evidence="2">Belongs to the universal ribosomal protein uS12 family.</text>
</comment>
<feature type="chain" id="PRO_1000194195" description="Small ribosomal subunit protein uS12">
    <location>
        <begin position="1"/>
        <end position="124"/>
    </location>
</feature>
<feature type="region of interest" description="Disordered" evidence="3">
    <location>
        <begin position="105"/>
        <end position="124"/>
    </location>
</feature>
<feature type="compositionally biased region" description="Basic residues" evidence="3">
    <location>
        <begin position="108"/>
        <end position="118"/>
    </location>
</feature>
<feature type="modified residue" description="3-methylthioaspartic acid" evidence="1">
    <location>
        <position position="89"/>
    </location>
</feature>